<feature type="chain" id="PRO_0000069457" description="N-formyl peptide receptor 3">
    <location>
        <begin position="1"/>
        <end position="353"/>
    </location>
</feature>
<feature type="topological domain" description="Extracellular" evidence="1">
    <location>
        <begin position="1"/>
        <end position="27"/>
    </location>
</feature>
<feature type="transmembrane region" description="Helical; Name=1" evidence="1">
    <location>
        <begin position="28"/>
        <end position="50"/>
    </location>
</feature>
<feature type="topological domain" description="Cytoplasmic" evidence="1">
    <location>
        <begin position="51"/>
        <end position="61"/>
    </location>
</feature>
<feature type="transmembrane region" description="Helical; Name=2" evidence="1">
    <location>
        <begin position="62"/>
        <end position="83"/>
    </location>
</feature>
<feature type="topological domain" description="Extracellular" evidence="1">
    <location>
        <begin position="84"/>
        <end position="100"/>
    </location>
</feature>
<feature type="transmembrane region" description="Helical; Name=3" evidence="1">
    <location>
        <begin position="101"/>
        <end position="121"/>
    </location>
</feature>
<feature type="topological domain" description="Cytoplasmic" evidence="1">
    <location>
        <begin position="122"/>
        <end position="140"/>
    </location>
</feature>
<feature type="transmembrane region" description="Helical; Name=4" evidence="1">
    <location>
        <begin position="141"/>
        <end position="162"/>
    </location>
</feature>
<feature type="topological domain" description="Extracellular" evidence="1">
    <location>
        <begin position="163"/>
        <end position="205"/>
    </location>
</feature>
<feature type="transmembrane region" description="Helical; Name=5" evidence="1">
    <location>
        <begin position="206"/>
        <end position="226"/>
    </location>
</feature>
<feature type="topological domain" description="Cytoplasmic" evidence="1">
    <location>
        <begin position="227"/>
        <end position="242"/>
    </location>
</feature>
<feature type="transmembrane region" description="Helical; Name=6" evidence="1">
    <location>
        <begin position="243"/>
        <end position="266"/>
    </location>
</feature>
<feature type="topological domain" description="Extracellular" evidence="1">
    <location>
        <begin position="267"/>
        <end position="286"/>
    </location>
</feature>
<feature type="transmembrane region" description="Helical; Name=7" evidence="1">
    <location>
        <begin position="287"/>
        <end position="306"/>
    </location>
</feature>
<feature type="topological domain" description="Cytoplasmic" evidence="1">
    <location>
        <begin position="307"/>
        <end position="353"/>
    </location>
</feature>
<feature type="region of interest" description="Disordered" evidence="3">
    <location>
        <begin position="327"/>
        <end position="353"/>
    </location>
</feature>
<feature type="compositionally biased region" description="Polar residues" evidence="3">
    <location>
        <begin position="331"/>
        <end position="343"/>
    </location>
</feature>
<feature type="glycosylation site" description="N-linked (GlcNAc...) asparagine" evidence="1">
    <location>
        <position position="4"/>
    </location>
</feature>
<feature type="glycosylation site" description="N-linked (GlcNAc...) asparagine" evidence="1">
    <location>
        <position position="10"/>
    </location>
</feature>
<feature type="disulfide bond" evidence="2">
    <location>
        <begin position="98"/>
        <end position="176"/>
    </location>
</feature>
<feature type="sequence conflict" description="In Ref. 1; AAA58482." evidence="5" ref="1">
    <original>G</original>
    <variation>A</variation>
    <location>
        <position position="94"/>
    </location>
</feature>
<feature type="sequence conflict" description="In Ref. 1; AAA58482." evidence="5" ref="1">
    <original>S</original>
    <variation>T</variation>
    <location>
        <position position="211"/>
    </location>
</feature>
<feature type="sequence conflict" description="In Ref. 1; AAA58482." evidence="5" ref="1">
    <original>D</original>
    <variation>H</variation>
    <location>
        <position position="338"/>
    </location>
</feature>
<name>FPR3_HUMAN</name>
<protein>
    <recommendedName>
        <fullName>N-formyl peptide receptor 3</fullName>
    </recommendedName>
    <alternativeName>
        <fullName>FMLP-related receptor II</fullName>
        <shortName>FMLP-R-II</shortName>
    </alternativeName>
    <alternativeName>
        <fullName>Formyl peptide receptor-like 2</fullName>
    </alternativeName>
</protein>
<dbReference type="EMBL" id="M76673">
    <property type="protein sequence ID" value="AAA58482.1"/>
    <property type="molecule type" value="mRNA"/>
</dbReference>
<dbReference type="EMBL" id="L14061">
    <property type="protein sequence ID" value="AAA52474.1"/>
    <property type="molecule type" value="Genomic_DNA"/>
</dbReference>
<dbReference type="EMBL" id="AY262690">
    <property type="protein sequence ID" value="AAP20654.1"/>
    <property type="molecule type" value="Genomic_DNA"/>
</dbReference>
<dbReference type="EMBL" id="BC059388">
    <property type="protein sequence ID" value="AAH59388.1"/>
    <property type="molecule type" value="mRNA"/>
</dbReference>
<dbReference type="EMBL" id="BC069070">
    <property type="protein sequence ID" value="AAH69070.1"/>
    <property type="molecule type" value="mRNA"/>
</dbReference>
<dbReference type="EMBL" id="BC069593">
    <property type="protein sequence ID" value="AAH69593.1"/>
    <property type="molecule type" value="mRNA"/>
</dbReference>
<dbReference type="EMBL" id="BC069812">
    <property type="protein sequence ID" value="AAH69812.1"/>
    <property type="molecule type" value="mRNA"/>
</dbReference>
<dbReference type="CCDS" id="CCDS12841.1"/>
<dbReference type="PIR" id="C42009">
    <property type="entry name" value="C42009"/>
</dbReference>
<dbReference type="RefSeq" id="NP_002021.3">
    <property type="nucleotide sequence ID" value="NM_002030.4"/>
</dbReference>
<dbReference type="RefSeq" id="XP_011524989.1">
    <property type="nucleotide sequence ID" value="XM_011526687.3"/>
</dbReference>
<dbReference type="RefSeq" id="XP_054176392.1">
    <property type="nucleotide sequence ID" value="XM_054320417.1"/>
</dbReference>
<dbReference type="SMR" id="P25089"/>
<dbReference type="FunCoup" id="P25089">
    <property type="interactions" value="457"/>
</dbReference>
<dbReference type="STRING" id="9606.ENSP00000341821"/>
<dbReference type="BindingDB" id="P25089"/>
<dbReference type="ChEMBL" id="CHEMBL5646"/>
<dbReference type="GuidetoPHARMACOLOGY" id="224"/>
<dbReference type="GlyCosmos" id="P25089">
    <property type="glycosylation" value="2 sites, No reported glycans"/>
</dbReference>
<dbReference type="GlyGen" id="P25089">
    <property type="glycosylation" value="2 sites"/>
</dbReference>
<dbReference type="iPTMnet" id="P25089"/>
<dbReference type="PhosphoSitePlus" id="P25089"/>
<dbReference type="BioMuta" id="FPR3"/>
<dbReference type="DMDM" id="38258904"/>
<dbReference type="MassIVE" id="P25089"/>
<dbReference type="PaxDb" id="9606-ENSP00000341821"/>
<dbReference type="PeptideAtlas" id="P25089"/>
<dbReference type="ProteomicsDB" id="54251"/>
<dbReference type="TopDownProteomics" id="P25089"/>
<dbReference type="Antibodypedia" id="19053">
    <property type="antibodies" value="333 antibodies from 30 providers"/>
</dbReference>
<dbReference type="DNASU" id="2359"/>
<dbReference type="Ensembl" id="ENST00000339223.5">
    <property type="protein sequence ID" value="ENSP00000341821.3"/>
    <property type="gene ID" value="ENSG00000187474.5"/>
</dbReference>
<dbReference type="Ensembl" id="ENST00000595991.1">
    <property type="protein sequence ID" value="ENSP00000470471.1"/>
    <property type="gene ID" value="ENSG00000187474.5"/>
</dbReference>
<dbReference type="GeneID" id="2359"/>
<dbReference type="KEGG" id="hsa:2359"/>
<dbReference type="MANE-Select" id="ENST00000339223.5">
    <property type="protein sequence ID" value="ENSP00000341821.3"/>
    <property type="RefSeq nucleotide sequence ID" value="NM_002030.5"/>
    <property type="RefSeq protein sequence ID" value="NP_002021.3"/>
</dbReference>
<dbReference type="AGR" id="HGNC:3828"/>
<dbReference type="CTD" id="2359"/>
<dbReference type="DisGeNET" id="2359"/>
<dbReference type="GeneCards" id="FPR3"/>
<dbReference type="HGNC" id="HGNC:3828">
    <property type="gene designation" value="FPR3"/>
</dbReference>
<dbReference type="HPA" id="ENSG00000187474">
    <property type="expression patterns" value="Tissue enhanced (lung)"/>
</dbReference>
<dbReference type="MIM" id="136539">
    <property type="type" value="gene"/>
</dbReference>
<dbReference type="neXtProt" id="NX_P25089"/>
<dbReference type="OpenTargets" id="ENSG00000187474"/>
<dbReference type="PharmGKB" id="PA162388910"/>
<dbReference type="VEuPathDB" id="HostDB:ENSG00000187474"/>
<dbReference type="eggNOG" id="KOG3656">
    <property type="taxonomic scope" value="Eukaryota"/>
</dbReference>
<dbReference type="GeneTree" id="ENSGT01020000230438"/>
<dbReference type="HOGENOM" id="CLU_009579_8_0_1"/>
<dbReference type="InParanoid" id="P25089"/>
<dbReference type="OMA" id="RVIMGLW"/>
<dbReference type="OrthoDB" id="6088892at2759"/>
<dbReference type="PAN-GO" id="P25089">
    <property type="GO annotations" value="7 GO annotations based on evolutionary models"/>
</dbReference>
<dbReference type="PhylomeDB" id="P25089"/>
<dbReference type="TreeFam" id="TF330976"/>
<dbReference type="PathwayCommons" id="P25089"/>
<dbReference type="Reactome" id="R-HSA-418594">
    <property type="pathway name" value="G alpha (i) signalling events"/>
</dbReference>
<dbReference type="Reactome" id="R-HSA-444473">
    <property type="pathway name" value="Formyl peptide receptors bind formyl peptides and many other ligands"/>
</dbReference>
<dbReference type="SignaLink" id="P25089"/>
<dbReference type="SIGNOR" id="P25089"/>
<dbReference type="BioGRID-ORCS" id="2359">
    <property type="hits" value="10 hits in 1142 CRISPR screens"/>
</dbReference>
<dbReference type="GeneWiki" id="Formyl_peptide_receptor_3"/>
<dbReference type="GenomeRNAi" id="2359"/>
<dbReference type="Pharos" id="P25089">
    <property type="development level" value="Tchem"/>
</dbReference>
<dbReference type="PRO" id="PR:P25089"/>
<dbReference type="Proteomes" id="UP000005640">
    <property type="component" value="Chromosome 19"/>
</dbReference>
<dbReference type="RNAct" id="P25089">
    <property type="molecule type" value="protein"/>
</dbReference>
<dbReference type="Bgee" id="ENSG00000187474">
    <property type="expression patterns" value="Expressed in gall bladder and 124 other cell types or tissues"/>
</dbReference>
<dbReference type="ExpressionAtlas" id="P25089">
    <property type="expression patterns" value="baseline and differential"/>
</dbReference>
<dbReference type="GO" id="GO:0016020">
    <property type="term" value="C:membrane"/>
    <property type="evidence" value="ECO:0000304"/>
    <property type="project" value="ProtInc"/>
</dbReference>
<dbReference type="GO" id="GO:0005886">
    <property type="term" value="C:plasma membrane"/>
    <property type="evidence" value="ECO:0000318"/>
    <property type="project" value="GO_Central"/>
</dbReference>
<dbReference type="GO" id="GO:0004875">
    <property type="term" value="F:complement receptor activity"/>
    <property type="evidence" value="ECO:0000318"/>
    <property type="project" value="GO_Central"/>
</dbReference>
<dbReference type="GO" id="GO:0004982">
    <property type="term" value="F:N-formyl peptide receptor activity"/>
    <property type="evidence" value="ECO:0000318"/>
    <property type="project" value="GO_Central"/>
</dbReference>
<dbReference type="GO" id="GO:0006935">
    <property type="term" value="P:chemotaxis"/>
    <property type="evidence" value="ECO:0007669"/>
    <property type="project" value="UniProtKB-KW"/>
</dbReference>
<dbReference type="GO" id="GO:0002430">
    <property type="term" value="P:complement receptor mediated signaling pathway"/>
    <property type="evidence" value="ECO:0000318"/>
    <property type="project" value="GO_Central"/>
</dbReference>
<dbReference type="GO" id="GO:0006954">
    <property type="term" value="P:inflammatory response"/>
    <property type="evidence" value="ECO:0000318"/>
    <property type="project" value="GO_Central"/>
</dbReference>
<dbReference type="GO" id="GO:0007200">
    <property type="term" value="P:phospholipase C-activating G protein-coupled receptor signaling pathway"/>
    <property type="evidence" value="ECO:0000318"/>
    <property type="project" value="GO_Central"/>
</dbReference>
<dbReference type="GO" id="GO:0007204">
    <property type="term" value="P:positive regulation of cytosolic calcium ion concentration"/>
    <property type="evidence" value="ECO:0000318"/>
    <property type="project" value="GO_Central"/>
</dbReference>
<dbReference type="GO" id="GO:0007165">
    <property type="term" value="P:signal transduction"/>
    <property type="evidence" value="ECO:0000304"/>
    <property type="project" value="ProtInc"/>
</dbReference>
<dbReference type="FunFam" id="1.20.1070.10:FF:000034">
    <property type="entry name" value="G-protein coupled receptor 1"/>
    <property type="match status" value="1"/>
</dbReference>
<dbReference type="Gene3D" id="1.20.1070.10">
    <property type="entry name" value="Rhodopsin 7-helix transmembrane proteins"/>
    <property type="match status" value="1"/>
</dbReference>
<dbReference type="InterPro" id="IPR000826">
    <property type="entry name" value="Formyl_rcpt-rel"/>
</dbReference>
<dbReference type="InterPro" id="IPR000276">
    <property type="entry name" value="GPCR_Rhodpsn"/>
</dbReference>
<dbReference type="InterPro" id="IPR017452">
    <property type="entry name" value="GPCR_Rhodpsn_7TM"/>
</dbReference>
<dbReference type="PANTHER" id="PTHR24225">
    <property type="entry name" value="CHEMOTACTIC RECEPTOR"/>
    <property type="match status" value="1"/>
</dbReference>
<dbReference type="PANTHER" id="PTHR24225:SF16">
    <property type="entry name" value="N-FORMYL PEPTIDE RECEPTOR 3"/>
    <property type="match status" value="1"/>
</dbReference>
<dbReference type="Pfam" id="PF00001">
    <property type="entry name" value="7tm_1"/>
    <property type="match status" value="1"/>
</dbReference>
<dbReference type="PRINTS" id="PR00526">
    <property type="entry name" value="FMETLEUPHER"/>
</dbReference>
<dbReference type="PRINTS" id="PR00237">
    <property type="entry name" value="GPCRRHODOPSN"/>
</dbReference>
<dbReference type="SUPFAM" id="SSF81321">
    <property type="entry name" value="Family A G protein-coupled receptor-like"/>
    <property type="match status" value="1"/>
</dbReference>
<dbReference type="PROSITE" id="PS00237">
    <property type="entry name" value="G_PROTEIN_RECEP_F1_1"/>
    <property type="match status" value="1"/>
</dbReference>
<dbReference type="PROSITE" id="PS50262">
    <property type="entry name" value="G_PROTEIN_RECEP_F1_2"/>
    <property type="match status" value="1"/>
</dbReference>
<reference key="1">
    <citation type="journal article" date="1992" name="Genomics">
        <title>Mapping of genes for the human C5a receptor (C5AR), human FMLP receptor (FPR), and two FMLP receptor homologue orphan receptors (FPRH1, FPRH2) to chromosome 19.</title>
        <authorList>
            <person name="Bao L."/>
            <person name="Gerard N.P."/>
            <person name="Eddy R.L. Jr."/>
            <person name="Shows T.B."/>
            <person name="Gerard C."/>
        </authorList>
    </citation>
    <scope>NUCLEOTIDE SEQUENCE [MRNA]</scope>
</reference>
<reference key="2">
    <citation type="journal article" date="1994" name="Biochem. Biophys. Res. Commun.">
        <title>Differential expression of members of the N-formylpeptide receptor gene cluster in human phagocytes.</title>
        <authorList>
            <person name="Durstin M."/>
            <person name="Gao J.-L."/>
            <person name="Tiffany H.L."/>
            <person name="McDermott D."/>
            <person name="Murphy P.M."/>
        </authorList>
    </citation>
    <scope>NUCLEOTIDE SEQUENCE [GENOMIC DNA]</scope>
</reference>
<reference key="3">
    <citation type="submission" date="2003-03" db="EMBL/GenBank/DDBJ databases">
        <title>cDNA clones of human proteins involved in signal transduction sequenced by the Guthrie cDNA resource center (www.cdna.org).</title>
        <authorList>
            <person name="Kopatz S.A."/>
            <person name="Aronstam R.S."/>
            <person name="Sharma S.V."/>
        </authorList>
    </citation>
    <scope>NUCLEOTIDE SEQUENCE [LARGE SCALE MRNA]</scope>
</reference>
<reference key="4">
    <citation type="journal article" date="2004" name="Genome Res.">
        <title>The status, quality, and expansion of the NIH full-length cDNA project: the Mammalian Gene Collection (MGC).</title>
        <authorList>
            <consortium name="The MGC Project Team"/>
        </authorList>
    </citation>
    <scope>NUCLEOTIDE SEQUENCE [LARGE SCALE MRNA]</scope>
    <source>
        <tissue>Placenta</tissue>
    </source>
</reference>
<reference key="5">
    <citation type="journal article" date="2004" name="Biochem. Biophys. Res. Commun.">
        <title>N-Formylated humanin activates both formyl peptide receptor-like 1 and 2.</title>
        <authorList>
            <person name="Harada M."/>
            <person name="Habata Y."/>
            <person name="Hosoya M."/>
            <person name="Nishi K."/>
            <person name="Fujii R."/>
            <person name="Kobayashi M."/>
            <person name="Hinuma S."/>
        </authorList>
    </citation>
    <scope>FUNCTION</scope>
    <scope>TISSUE SPECIFICITY</scope>
</reference>
<accession>P25089</accession>
<organism>
    <name type="scientific">Homo sapiens</name>
    <name type="common">Human</name>
    <dbReference type="NCBI Taxonomy" id="9606"/>
    <lineage>
        <taxon>Eukaryota</taxon>
        <taxon>Metazoa</taxon>
        <taxon>Chordata</taxon>
        <taxon>Craniata</taxon>
        <taxon>Vertebrata</taxon>
        <taxon>Euteleostomi</taxon>
        <taxon>Mammalia</taxon>
        <taxon>Eutheria</taxon>
        <taxon>Euarchontoglires</taxon>
        <taxon>Primates</taxon>
        <taxon>Haplorrhini</taxon>
        <taxon>Catarrhini</taxon>
        <taxon>Hominidae</taxon>
        <taxon>Homo</taxon>
    </lineage>
</organism>
<proteinExistence type="evidence at protein level"/>
<comment type="function">
    <text evidence="4">Low affinity receptor for N-formyl-methionyl peptides, which are powerful neutrophils chemotactic factors. Binding of FMLP to the receptor causes activation of neutrophils. This response is mediated via a G-protein that activates a phosphatidylinositol-calcium second messenger system. Acts as a receptor for humanin (PubMed:15465011).</text>
</comment>
<comment type="subcellular location">
    <subcellularLocation>
        <location>Cell membrane</location>
        <topology>Multi-pass membrane protein</topology>
    </subcellularLocation>
</comment>
<comment type="tissue specificity">
    <text evidence="4">Detected in various tissues with highest expression in lung.</text>
</comment>
<comment type="similarity">
    <text evidence="2">Belongs to the G-protein coupled receptor 1 family.</text>
</comment>
<sequence length="353" mass="39965">METNFSIPLNETEEVLPEPAGHTVLWIFSLLVHGVTFVFGVLGNGLVIWVAGFRMTRTVNTICYLNLALADFSFSAILPFRMVSVAMREKWPFGSFLCKLVHVMIDINLFVSVYLITIIALDRCICVLHPAWAQNHRTMSLAKRVMTGLWIFTIVLTLPNFIFWTTISTTNGDTYCIFNFAFWGDTAVERLNVFITMAKVFLILHFIIGFSVPMSIITVCYGIIAAKIHRNHMIKSSRPLRVFAAVVASFFICWFPYELIGILMAVWLKEMLLNGKYKIILVLINPTSSLAFFNSCLNPILYVFMGRNFQERLIRSLPTSLERALTEVPDSAQTSNTDTTSASPPEETELQAM</sequence>
<keyword id="KW-1003">Cell membrane</keyword>
<keyword id="KW-0145">Chemotaxis</keyword>
<keyword id="KW-1015">Disulfide bond</keyword>
<keyword id="KW-0297">G-protein coupled receptor</keyword>
<keyword id="KW-0325">Glycoprotein</keyword>
<keyword id="KW-0472">Membrane</keyword>
<keyword id="KW-1267">Proteomics identification</keyword>
<keyword id="KW-0675">Receptor</keyword>
<keyword id="KW-1185">Reference proteome</keyword>
<keyword id="KW-0807">Transducer</keyword>
<keyword id="KW-0812">Transmembrane</keyword>
<keyword id="KW-1133">Transmembrane helix</keyword>
<gene>
    <name type="primary">FPR3</name>
    <name type="synonym">FPRH1</name>
    <name type="synonym">FPRL2</name>
</gene>
<evidence type="ECO:0000255" key="1"/>
<evidence type="ECO:0000255" key="2">
    <source>
        <dbReference type="PROSITE-ProRule" id="PRU00521"/>
    </source>
</evidence>
<evidence type="ECO:0000256" key="3">
    <source>
        <dbReference type="SAM" id="MobiDB-lite"/>
    </source>
</evidence>
<evidence type="ECO:0000269" key="4">
    <source>
    </source>
</evidence>
<evidence type="ECO:0000305" key="5"/>